<evidence type="ECO:0000255" key="1">
    <source>
        <dbReference type="HAMAP-Rule" id="MF_00111"/>
    </source>
</evidence>
<keyword id="KW-0131">Cell cycle</keyword>
<keyword id="KW-0132">Cell division</keyword>
<keyword id="KW-0133">Cell shape</keyword>
<keyword id="KW-0961">Cell wall biogenesis/degradation</keyword>
<keyword id="KW-0963">Cytoplasm</keyword>
<keyword id="KW-0573">Peptidoglycan synthesis</keyword>
<keyword id="KW-0670">Pyruvate</keyword>
<keyword id="KW-1185">Reference proteome</keyword>
<keyword id="KW-0808">Transferase</keyword>
<comment type="function">
    <text evidence="1">Cell wall formation. Adds enolpyruvyl to UDP-N-acetylglucosamine.</text>
</comment>
<comment type="catalytic activity">
    <reaction evidence="1">
        <text>phosphoenolpyruvate + UDP-N-acetyl-alpha-D-glucosamine = UDP-N-acetyl-3-O-(1-carboxyvinyl)-alpha-D-glucosamine + phosphate</text>
        <dbReference type="Rhea" id="RHEA:18681"/>
        <dbReference type="ChEBI" id="CHEBI:43474"/>
        <dbReference type="ChEBI" id="CHEBI:57705"/>
        <dbReference type="ChEBI" id="CHEBI:58702"/>
        <dbReference type="ChEBI" id="CHEBI:68483"/>
        <dbReference type="EC" id="2.5.1.7"/>
    </reaction>
</comment>
<comment type="pathway">
    <text evidence="1">Cell wall biogenesis; peptidoglycan biosynthesis.</text>
</comment>
<comment type="subcellular location">
    <subcellularLocation>
        <location evidence="1">Cytoplasm</location>
    </subcellularLocation>
</comment>
<comment type="similarity">
    <text evidence="1">Belongs to the EPSP synthase family. MurA subfamily.</text>
</comment>
<organism>
    <name type="scientific">Legionella pneumophila subsp. pneumophila (strain Philadelphia 1 / ATCC 33152 / DSM 7513)</name>
    <dbReference type="NCBI Taxonomy" id="272624"/>
    <lineage>
        <taxon>Bacteria</taxon>
        <taxon>Pseudomonadati</taxon>
        <taxon>Pseudomonadota</taxon>
        <taxon>Gammaproteobacteria</taxon>
        <taxon>Legionellales</taxon>
        <taxon>Legionellaceae</taxon>
        <taxon>Legionella</taxon>
    </lineage>
</organism>
<reference key="1">
    <citation type="journal article" date="2004" name="Science">
        <title>The genomic sequence of the accidental pathogen Legionella pneumophila.</title>
        <authorList>
            <person name="Chien M."/>
            <person name="Morozova I."/>
            <person name="Shi S."/>
            <person name="Sheng H."/>
            <person name="Chen J."/>
            <person name="Gomez S.M."/>
            <person name="Asamani G."/>
            <person name="Hill K."/>
            <person name="Nuara J."/>
            <person name="Feder M."/>
            <person name="Rineer J."/>
            <person name="Greenberg J.J."/>
            <person name="Steshenko V."/>
            <person name="Park S.H."/>
            <person name="Zhao B."/>
            <person name="Teplitskaya E."/>
            <person name="Edwards J.R."/>
            <person name="Pampou S."/>
            <person name="Georghiou A."/>
            <person name="Chou I.-C."/>
            <person name="Iannuccilli W."/>
            <person name="Ulz M.E."/>
            <person name="Kim D.H."/>
            <person name="Geringer-Sameth A."/>
            <person name="Goldsberry C."/>
            <person name="Morozov P."/>
            <person name="Fischer S.G."/>
            <person name="Segal G."/>
            <person name="Qu X."/>
            <person name="Rzhetsky A."/>
            <person name="Zhang P."/>
            <person name="Cayanis E."/>
            <person name="De Jong P.J."/>
            <person name="Ju J."/>
            <person name="Kalachikov S."/>
            <person name="Shuman H.A."/>
            <person name="Russo J.J."/>
        </authorList>
    </citation>
    <scope>NUCLEOTIDE SEQUENCE [LARGE SCALE GENOMIC DNA]</scope>
    <source>
        <strain>Philadelphia 1 / ATCC 33152 / DSM 7513</strain>
    </source>
</reference>
<feature type="chain" id="PRO_0000231221" description="UDP-N-acetylglucosamine 1-carboxyvinyltransferase">
    <location>
        <begin position="1"/>
        <end position="422"/>
    </location>
</feature>
<feature type="active site" description="Proton donor" evidence="1">
    <location>
        <position position="117"/>
    </location>
</feature>
<feature type="binding site" evidence="1">
    <location>
        <begin position="22"/>
        <end position="23"/>
    </location>
    <ligand>
        <name>phosphoenolpyruvate</name>
        <dbReference type="ChEBI" id="CHEBI:58702"/>
    </ligand>
</feature>
<feature type="binding site" evidence="1">
    <location>
        <position position="93"/>
    </location>
    <ligand>
        <name>UDP-N-acetyl-alpha-D-glucosamine</name>
        <dbReference type="ChEBI" id="CHEBI:57705"/>
    </ligand>
</feature>
<feature type="binding site" evidence="1">
    <location>
        <begin position="122"/>
        <end position="126"/>
    </location>
    <ligand>
        <name>UDP-N-acetyl-alpha-D-glucosamine</name>
        <dbReference type="ChEBI" id="CHEBI:57705"/>
    </ligand>
</feature>
<feature type="binding site" evidence="1">
    <location>
        <position position="308"/>
    </location>
    <ligand>
        <name>UDP-N-acetyl-alpha-D-glucosamine</name>
        <dbReference type="ChEBI" id="CHEBI:57705"/>
    </ligand>
</feature>
<feature type="binding site" evidence="1">
    <location>
        <position position="330"/>
    </location>
    <ligand>
        <name>UDP-N-acetyl-alpha-D-glucosamine</name>
        <dbReference type="ChEBI" id="CHEBI:57705"/>
    </ligand>
</feature>
<feature type="modified residue" description="2-(S-cysteinyl)pyruvic acid O-phosphothioketal" evidence="1">
    <location>
        <position position="117"/>
    </location>
</feature>
<proteinExistence type="inferred from homology"/>
<name>MURA_LEGPH</name>
<gene>
    <name evidence="1" type="primary">murA</name>
    <name type="ordered locus">lpg0847</name>
</gene>
<protein>
    <recommendedName>
        <fullName evidence="1">UDP-N-acetylglucosamine 1-carboxyvinyltransferase</fullName>
        <ecNumber evidence="1">2.5.1.7</ecNumber>
    </recommendedName>
    <alternativeName>
        <fullName evidence="1">Enoylpyruvate transferase</fullName>
    </alternativeName>
    <alternativeName>
        <fullName evidence="1">UDP-N-acetylglucosamine enolpyruvyl transferase</fullName>
        <shortName evidence="1">EPT</shortName>
    </alternativeName>
</protein>
<sequence>MDKLLINGGKALHGEVVISGAKNAALPIMAASLLASDHVTISNVPHLKDITTMMELLGQLGAHLIVDEKMNVQVDSSQVNEFVAPYDLVKTMRASILVLGPMLARFGKADVSLPGGCAIGTRPVDLHLKALRAMGADITVKNGYINARCKKGCLQGKRLMFDTVTVTGTENVLMAAVLAEGITTIKNAAREPEVVDLANFLIQMGAKIRGAGTSTIEVEGVESLNGGTYSVMSDRIEAGTYLAAGALTRGQVTVKKVRPDTLLSQLCKFEEAGAELTIGEDWVSLNMHNKRPQAVNISTAPYPAFATDMQAQFMAMNSVAEGSSTIIETIFENRFMHVQELQRMGANIQLNGNTAIVHGVEKLTGAPVMATDLRASASLILAGLVAEGETVVERIYHVDRGYERIEEKLSLLGADIKRVSDR</sequence>
<accession>Q5ZX85</accession>
<dbReference type="EC" id="2.5.1.7" evidence="1"/>
<dbReference type="EMBL" id="AE017354">
    <property type="protein sequence ID" value="AAU26935.1"/>
    <property type="molecule type" value="Genomic_DNA"/>
</dbReference>
<dbReference type="RefSeq" id="WP_010946583.1">
    <property type="nucleotide sequence ID" value="NC_002942.5"/>
</dbReference>
<dbReference type="RefSeq" id="YP_094882.1">
    <property type="nucleotide sequence ID" value="NC_002942.5"/>
</dbReference>
<dbReference type="SMR" id="Q5ZX85"/>
<dbReference type="STRING" id="272624.lpg0847"/>
<dbReference type="PaxDb" id="272624-lpg0847"/>
<dbReference type="GeneID" id="57034835"/>
<dbReference type="KEGG" id="lpn:lpg0847"/>
<dbReference type="PATRIC" id="fig|272624.6.peg.877"/>
<dbReference type="eggNOG" id="COG0766">
    <property type="taxonomic scope" value="Bacteria"/>
</dbReference>
<dbReference type="HOGENOM" id="CLU_027387_0_0_6"/>
<dbReference type="OrthoDB" id="9803760at2"/>
<dbReference type="UniPathway" id="UPA00219"/>
<dbReference type="Proteomes" id="UP000000609">
    <property type="component" value="Chromosome"/>
</dbReference>
<dbReference type="GO" id="GO:0005737">
    <property type="term" value="C:cytoplasm"/>
    <property type="evidence" value="ECO:0007669"/>
    <property type="project" value="UniProtKB-SubCell"/>
</dbReference>
<dbReference type="GO" id="GO:0008760">
    <property type="term" value="F:UDP-N-acetylglucosamine 1-carboxyvinyltransferase activity"/>
    <property type="evidence" value="ECO:0007669"/>
    <property type="project" value="UniProtKB-UniRule"/>
</dbReference>
<dbReference type="GO" id="GO:0051301">
    <property type="term" value="P:cell division"/>
    <property type="evidence" value="ECO:0007669"/>
    <property type="project" value="UniProtKB-KW"/>
</dbReference>
<dbReference type="GO" id="GO:0071555">
    <property type="term" value="P:cell wall organization"/>
    <property type="evidence" value="ECO:0007669"/>
    <property type="project" value="UniProtKB-KW"/>
</dbReference>
<dbReference type="GO" id="GO:0009252">
    <property type="term" value="P:peptidoglycan biosynthetic process"/>
    <property type="evidence" value="ECO:0007669"/>
    <property type="project" value="UniProtKB-UniRule"/>
</dbReference>
<dbReference type="GO" id="GO:0008360">
    <property type="term" value="P:regulation of cell shape"/>
    <property type="evidence" value="ECO:0007669"/>
    <property type="project" value="UniProtKB-KW"/>
</dbReference>
<dbReference type="GO" id="GO:0019277">
    <property type="term" value="P:UDP-N-acetylgalactosamine biosynthetic process"/>
    <property type="evidence" value="ECO:0007669"/>
    <property type="project" value="InterPro"/>
</dbReference>
<dbReference type="CDD" id="cd01555">
    <property type="entry name" value="UdpNAET"/>
    <property type="match status" value="1"/>
</dbReference>
<dbReference type="FunFam" id="3.65.10.10:FF:000001">
    <property type="entry name" value="UDP-N-acetylglucosamine 1-carboxyvinyltransferase"/>
    <property type="match status" value="1"/>
</dbReference>
<dbReference type="Gene3D" id="3.65.10.10">
    <property type="entry name" value="Enolpyruvate transferase domain"/>
    <property type="match status" value="2"/>
</dbReference>
<dbReference type="HAMAP" id="MF_00111">
    <property type="entry name" value="MurA"/>
    <property type="match status" value="1"/>
</dbReference>
<dbReference type="InterPro" id="IPR001986">
    <property type="entry name" value="Enolpyruvate_Tfrase_dom"/>
</dbReference>
<dbReference type="InterPro" id="IPR036968">
    <property type="entry name" value="Enolpyruvate_Tfrase_sf"/>
</dbReference>
<dbReference type="InterPro" id="IPR050068">
    <property type="entry name" value="MurA_subfamily"/>
</dbReference>
<dbReference type="InterPro" id="IPR013792">
    <property type="entry name" value="RNA3'P_cycl/enolpyr_Trfase_a/b"/>
</dbReference>
<dbReference type="InterPro" id="IPR005750">
    <property type="entry name" value="UDP_GlcNAc_COvinyl_MurA"/>
</dbReference>
<dbReference type="NCBIfam" id="TIGR01072">
    <property type="entry name" value="murA"/>
    <property type="match status" value="1"/>
</dbReference>
<dbReference type="NCBIfam" id="NF006873">
    <property type="entry name" value="PRK09369.1"/>
    <property type="match status" value="1"/>
</dbReference>
<dbReference type="PANTHER" id="PTHR43783">
    <property type="entry name" value="UDP-N-ACETYLGLUCOSAMINE 1-CARBOXYVINYLTRANSFERASE"/>
    <property type="match status" value="1"/>
</dbReference>
<dbReference type="PANTHER" id="PTHR43783:SF1">
    <property type="entry name" value="UDP-N-ACETYLGLUCOSAMINE 1-CARBOXYVINYLTRANSFERASE"/>
    <property type="match status" value="1"/>
</dbReference>
<dbReference type="Pfam" id="PF00275">
    <property type="entry name" value="EPSP_synthase"/>
    <property type="match status" value="1"/>
</dbReference>
<dbReference type="SUPFAM" id="SSF55205">
    <property type="entry name" value="EPT/RTPC-like"/>
    <property type="match status" value="1"/>
</dbReference>